<sequence length="346" mass="37295">MSTPTTPLSYKDAGVDIDAGNALVNNIKSAVKRTRRPEVMGNLGGFGALCELPTKYKHPVLVSGTDGVGTKLRLAIDFKKHDNVGIDLVAMCSNDLIVSGAEPLFFLDYYATGKLDVEVATAVVKGIAEGCVQSGCALIGGETAEMPGMYEGDDYDLAGFCVGVVEKEEIIDGTKVQDGDALIALASSGPHSNGFSLIRKVLEVSKADPELELAGKPLIDHLLEPTKIYVKSLLKLLEQHDVHAMSHITGGGFWENIPRVLPEDCKAVVNSDSWQWPVVFNWLMENGNISEFEMYRTFNCGVGMVIALPADKVDSALALLKTEGENAWLIGNIAKRNGEEEQVEIL</sequence>
<evidence type="ECO:0000255" key="1">
    <source>
        <dbReference type="HAMAP-Rule" id="MF_00741"/>
    </source>
</evidence>
<feature type="chain" id="PRO_1000148295" description="Phosphoribosylformylglycinamidine cyclo-ligase">
    <location>
        <begin position="1"/>
        <end position="346"/>
    </location>
</feature>
<accession>B0TPW7</accession>
<name>PUR5_SHEHH</name>
<keyword id="KW-0067">ATP-binding</keyword>
<keyword id="KW-0963">Cytoplasm</keyword>
<keyword id="KW-0436">Ligase</keyword>
<keyword id="KW-0547">Nucleotide-binding</keyword>
<keyword id="KW-0658">Purine biosynthesis</keyword>
<reference key="1">
    <citation type="submission" date="2008-01" db="EMBL/GenBank/DDBJ databases">
        <title>Complete sequence of Shewanella halifaxensis HAW-EB4.</title>
        <authorList>
            <consortium name="US DOE Joint Genome Institute"/>
            <person name="Copeland A."/>
            <person name="Lucas S."/>
            <person name="Lapidus A."/>
            <person name="Glavina del Rio T."/>
            <person name="Dalin E."/>
            <person name="Tice H."/>
            <person name="Bruce D."/>
            <person name="Goodwin L."/>
            <person name="Pitluck S."/>
            <person name="Sims D."/>
            <person name="Brettin T."/>
            <person name="Detter J.C."/>
            <person name="Han C."/>
            <person name="Kuske C.R."/>
            <person name="Schmutz J."/>
            <person name="Larimer F."/>
            <person name="Land M."/>
            <person name="Hauser L."/>
            <person name="Kyrpides N."/>
            <person name="Kim E."/>
            <person name="Zhao J.-S."/>
            <person name="Richardson P."/>
        </authorList>
    </citation>
    <scope>NUCLEOTIDE SEQUENCE [LARGE SCALE GENOMIC DNA]</scope>
    <source>
        <strain>HAW-EB4</strain>
    </source>
</reference>
<comment type="catalytic activity">
    <reaction evidence="1">
        <text>2-formamido-N(1)-(5-O-phospho-beta-D-ribosyl)acetamidine + ATP = 5-amino-1-(5-phospho-beta-D-ribosyl)imidazole + ADP + phosphate + H(+)</text>
        <dbReference type="Rhea" id="RHEA:23032"/>
        <dbReference type="ChEBI" id="CHEBI:15378"/>
        <dbReference type="ChEBI" id="CHEBI:30616"/>
        <dbReference type="ChEBI" id="CHEBI:43474"/>
        <dbReference type="ChEBI" id="CHEBI:137981"/>
        <dbReference type="ChEBI" id="CHEBI:147287"/>
        <dbReference type="ChEBI" id="CHEBI:456216"/>
        <dbReference type="EC" id="6.3.3.1"/>
    </reaction>
</comment>
<comment type="pathway">
    <text evidence="1">Purine metabolism; IMP biosynthesis via de novo pathway; 5-amino-1-(5-phospho-D-ribosyl)imidazole from N(2)-formyl-N(1)-(5-phospho-D-ribosyl)glycinamide: step 2/2.</text>
</comment>
<comment type="subcellular location">
    <subcellularLocation>
        <location evidence="1">Cytoplasm</location>
    </subcellularLocation>
</comment>
<comment type="similarity">
    <text evidence="1">Belongs to the AIR synthase family.</text>
</comment>
<proteinExistence type="inferred from homology"/>
<organism>
    <name type="scientific">Shewanella halifaxensis (strain HAW-EB4)</name>
    <dbReference type="NCBI Taxonomy" id="458817"/>
    <lineage>
        <taxon>Bacteria</taxon>
        <taxon>Pseudomonadati</taxon>
        <taxon>Pseudomonadota</taxon>
        <taxon>Gammaproteobacteria</taxon>
        <taxon>Alteromonadales</taxon>
        <taxon>Shewanellaceae</taxon>
        <taxon>Shewanella</taxon>
    </lineage>
</organism>
<gene>
    <name evidence="1" type="primary">purM</name>
    <name type="ordered locus">Shal_1680</name>
</gene>
<protein>
    <recommendedName>
        <fullName evidence="1">Phosphoribosylformylglycinamidine cyclo-ligase</fullName>
        <ecNumber evidence="1">6.3.3.1</ecNumber>
    </recommendedName>
    <alternativeName>
        <fullName evidence="1">AIR synthase</fullName>
    </alternativeName>
    <alternativeName>
        <fullName evidence="1">AIRS</fullName>
    </alternativeName>
    <alternativeName>
        <fullName evidence="1">Phosphoribosyl-aminoimidazole synthetase</fullName>
    </alternativeName>
</protein>
<dbReference type="EC" id="6.3.3.1" evidence="1"/>
<dbReference type="EMBL" id="CP000931">
    <property type="protein sequence ID" value="ABZ76246.1"/>
    <property type="molecule type" value="Genomic_DNA"/>
</dbReference>
<dbReference type="RefSeq" id="WP_012276784.1">
    <property type="nucleotide sequence ID" value="NC_010334.1"/>
</dbReference>
<dbReference type="SMR" id="B0TPW7"/>
<dbReference type="STRING" id="458817.Shal_1680"/>
<dbReference type="KEGG" id="shl:Shal_1680"/>
<dbReference type="eggNOG" id="COG0150">
    <property type="taxonomic scope" value="Bacteria"/>
</dbReference>
<dbReference type="HOGENOM" id="CLU_047116_0_0_6"/>
<dbReference type="OrthoDB" id="9777881at2"/>
<dbReference type="UniPathway" id="UPA00074">
    <property type="reaction ID" value="UER00129"/>
</dbReference>
<dbReference type="Proteomes" id="UP000001317">
    <property type="component" value="Chromosome"/>
</dbReference>
<dbReference type="GO" id="GO:0005829">
    <property type="term" value="C:cytosol"/>
    <property type="evidence" value="ECO:0007669"/>
    <property type="project" value="TreeGrafter"/>
</dbReference>
<dbReference type="GO" id="GO:0005524">
    <property type="term" value="F:ATP binding"/>
    <property type="evidence" value="ECO:0007669"/>
    <property type="project" value="UniProtKB-KW"/>
</dbReference>
<dbReference type="GO" id="GO:0004637">
    <property type="term" value="F:phosphoribosylamine-glycine ligase activity"/>
    <property type="evidence" value="ECO:0007669"/>
    <property type="project" value="TreeGrafter"/>
</dbReference>
<dbReference type="GO" id="GO:0004641">
    <property type="term" value="F:phosphoribosylformylglycinamidine cyclo-ligase activity"/>
    <property type="evidence" value="ECO:0007669"/>
    <property type="project" value="UniProtKB-UniRule"/>
</dbReference>
<dbReference type="GO" id="GO:0006189">
    <property type="term" value="P:'de novo' IMP biosynthetic process"/>
    <property type="evidence" value="ECO:0007669"/>
    <property type="project" value="UniProtKB-UniRule"/>
</dbReference>
<dbReference type="GO" id="GO:0046084">
    <property type="term" value="P:adenine biosynthetic process"/>
    <property type="evidence" value="ECO:0007669"/>
    <property type="project" value="TreeGrafter"/>
</dbReference>
<dbReference type="CDD" id="cd02196">
    <property type="entry name" value="PurM"/>
    <property type="match status" value="1"/>
</dbReference>
<dbReference type="FunFam" id="3.30.1330.10:FF:000001">
    <property type="entry name" value="Phosphoribosylformylglycinamidine cyclo-ligase"/>
    <property type="match status" value="1"/>
</dbReference>
<dbReference type="FunFam" id="3.90.650.10:FF:000001">
    <property type="entry name" value="Phosphoribosylformylglycinamidine cyclo-ligase"/>
    <property type="match status" value="1"/>
</dbReference>
<dbReference type="Gene3D" id="3.90.650.10">
    <property type="entry name" value="PurM-like C-terminal domain"/>
    <property type="match status" value="1"/>
</dbReference>
<dbReference type="Gene3D" id="3.30.1330.10">
    <property type="entry name" value="PurM-like, N-terminal domain"/>
    <property type="match status" value="1"/>
</dbReference>
<dbReference type="HAMAP" id="MF_00741">
    <property type="entry name" value="AIRS"/>
    <property type="match status" value="1"/>
</dbReference>
<dbReference type="InterPro" id="IPR010918">
    <property type="entry name" value="PurM-like_C_dom"/>
</dbReference>
<dbReference type="InterPro" id="IPR036676">
    <property type="entry name" value="PurM-like_C_sf"/>
</dbReference>
<dbReference type="InterPro" id="IPR016188">
    <property type="entry name" value="PurM-like_N"/>
</dbReference>
<dbReference type="InterPro" id="IPR036921">
    <property type="entry name" value="PurM-like_N_sf"/>
</dbReference>
<dbReference type="InterPro" id="IPR004733">
    <property type="entry name" value="PurM_cligase"/>
</dbReference>
<dbReference type="NCBIfam" id="TIGR00878">
    <property type="entry name" value="purM"/>
    <property type="match status" value="1"/>
</dbReference>
<dbReference type="PANTHER" id="PTHR10520:SF12">
    <property type="entry name" value="TRIFUNCTIONAL PURINE BIOSYNTHETIC PROTEIN ADENOSINE-3"/>
    <property type="match status" value="1"/>
</dbReference>
<dbReference type="PANTHER" id="PTHR10520">
    <property type="entry name" value="TRIFUNCTIONAL PURINE BIOSYNTHETIC PROTEIN ADENOSINE-3-RELATED"/>
    <property type="match status" value="1"/>
</dbReference>
<dbReference type="Pfam" id="PF00586">
    <property type="entry name" value="AIRS"/>
    <property type="match status" value="1"/>
</dbReference>
<dbReference type="Pfam" id="PF02769">
    <property type="entry name" value="AIRS_C"/>
    <property type="match status" value="1"/>
</dbReference>
<dbReference type="SUPFAM" id="SSF56042">
    <property type="entry name" value="PurM C-terminal domain-like"/>
    <property type="match status" value="1"/>
</dbReference>
<dbReference type="SUPFAM" id="SSF55326">
    <property type="entry name" value="PurM N-terminal domain-like"/>
    <property type="match status" value="1"/>
</dbReference>